<comment type="function">
    <text evidence="1 2">DNA-binding protein that specifically recognizes consensus sequences at the breakpoint junctions in chromosomal translocations. Selectively binds single-stranded d(GT)n and d(GTT)n microsatellite repeats. Has much higher affinities for the homologous RNA sequences (GU)n and (GUU)n. Does not bind double-stranded DNA. Has a role in meiosis.</text>
</comment>
<comment type="subunit">
    <text evidence="1">Forms an octameric ring-shaped structure, which is capable of binding DNA or RNA.</text>
</comment>
<comment type="subcellular location">
    <subcellularLocation>
        <location evidence="3">Cytoplasm</location>
    </subcellularLocation>
    <subcellularLocation>
        <location evidence="3">Nucleus</location>
    </subcellularLocation>
</comment>
<comment type="miscellaneous">
    <text>Deletion of both tsn1 and trax results in slightly stimulated cell proliferation.</text>
</comment>
<comment type="similarity">
    <text evidence="4">Belongs to the translin family.</text>
</comment>
<feature type="chain" id="PRO_0000278571" description="Translin-1">
    <location>
        <begin position="1"/>
        <end position="220"/>
    </location>
</feature>
<protein>
    <recommendedName>
        <fullName>Translin-1</fullName>
    </recommendedName>
    <alternativeName>
        <fullName>Meiotically up-regulated gene 90 protein</fullName>
    </alternativeName>
    <alternativeName>
        <fullName>Translin homolog</fullName>
    </alternativeName>
</protein>
<organism>
    <name type="scientific">Schizosaccharomyces pombe (strain 972 / ATCC 24843)</name>
    <name type="common">Fission yeast</name>
    <dbReference type="NCBI Taxonomy" id="284812"/>
    <lineage>
        <taxon>Eukaryota</taxon>
        <taxon>Fungi</taxon>
        <taxon>Dikarya</taxon>
        <taxon>Ascomycota</taxon>
        <taxon>Taphrinomycotina</taxon>
        <taxon>Schizosaccharomycetes</taxon>
        <taxon>Schizosaccharomycetales</taxon>
        <taxon>Schizosaccharomycetaceae</taxon>
        <taxon>Schizosaccharomyces</taxon>
    </lineage>
</organism>
<accession>Q9P7V3</accession>
<proteinExistence type="evidence at protein level"/>
<sequence length="220" mass="25493">MNKSIFIQLQDQIDKEHSIREKLTAEVDLLDEKLRVLQLLLANCEQNLENQEEILEALEIIKSKTRGLAELASNFPYYKYNGVWDRSIQKVVYLYLLASWTGRLDKSLRPTYSLLSLSEVGQILQVPVFPEESTFHLSIEQYLHAVLSLCSELARQSVNSVISGNYHIPFEALNTIQKVHSSFQVLSLKNDSLRRHFDGLKYDLKRSEDVVYDLRIHKLV</sequence>
<name>TSN1_SCHPO</name>
<gene>
    <name type="primary">tsn1</name>
    <name type="synonym">mug90</name>
    <name type="ORF">SPAC30.03c</name>
</gene>
<keyword id="KW-0963">Cytoplasm</keyword>
<keyword id="KW-0238">DNA-binding</keyword>
<keyword id="KW-0469">Meiosis</keyword>
<keyword id="KW-0539">Nucleus</keyword>
<keyword id="KW-1185">Reference proteome</keyword>
<keyword id="KW-0694">RNA-binding</keyword>
<dbReference type="EMBL" id="CU329670">
    <property type="protein sequence ID" value="CAB66462.2"/>
    <property type="molecule type" value="Genomic_DNA"/>
</dbReference>
<dbReference type="PIR" id="T50209">
    <property type="entry name" value="T50209"/>
</dbReference>
<dbReference type="RefSeq" id="NP_594557.2">
    <property type="nucleotide sequence ID" value="NM_001019986.3"/>
</dbReference>
<dbReference type="SMR" id="Q9P7V3"/>
<dbReference type="BioGRID" id="278209">
    <property type="interactions" value="5"/>
</dbReference>
<dbReference type="FunCoup" id="Q9P7V3">
    <property type="interactions" value="1016"/>
</dbReference>
<dbReference type="STRING" id="284812.Q9P7V3"/>
<dbReference type="PaxDb" id="4896-SPAC30.03c.1"/>
<dbReference type="EnsemblFungi" id="SPAC30.03c.1">
    <property type="protein sequence ID" value="SPAC30.03c.1:pep"/>
    <property type="gene ID" value="SPAC30.03c"/>
</dbReference>
<dbReference type="GeneID" id="2541714"/>
<dbReference type="KEGG" id="spo:2541714"/>
<dbReference type="PomBase" id="SPAC30.03c">
    <property type="gene designation" value="tsn1"/>
</dbReference>
<dbReference type="VEuPathDB" id="FungiDB:SPAC30.03c"/>
<dbReference type="eggNOG" id="KOG3067">
    <property type="taxonomic scope" value="Eukaryota"/>
</dbReference>
<dbReference type="HOGENOM" id="CLU_079179_0_0_1"/>
<dbReference type="InParanoid" id="Q9P7V3"/>
<dbReference type="OMA" id="DAFHFTI"/>
<dbReference type="PhylomeDB" id="Q9P7V3"/>
<dbReference type="Reactome" id="R-SPO-426486">
    <property type="pathway name" value="Small interfering RNA (siRNA) biogenesis"/>
</dbReference>
<dbReference type="PRO" id="PR:Q9P7V3"/>
<dbReference type="Proteomes" id="UP000002485">
    <property type="component" value="Chromosome I"/>
</dbReference>
<dbReference type="GO" id="GO:0005737">
    <property type="term" value="C:cytoplasm"/>
    <property type="evidence" value="ECO:0000318"/>
    <property type="project" value="GO_Central"/>
</dbReference>
<dbReference type="GO" id="GO:0005829">
    <property type="term" value="C:cytosol"/>
    <property type="evidence" value="ECO:0007005"/>
    <property type="project" value="PomBase"/>
</dbReference>
<dbReference type="GO" id="GO:0005634">
    <property type="term" value="C:nucleus"/>
    <property type="evidence" value="ECO:0007005"/>
    <property type="project" value="PomBase"/>
</dbReference>
<dbReference type="GO" id="GO:1990605">
    <property type="term" value="F:GU repeat RNA binding"/>
    <property type="evidence" value="ECO:0000314"/>
    <property type="project" value="PomBase"/>
</dbReference>
<dbReference type="GO" id="GO:0035939">
    <property type="term" value="F:microsatellite binding"/>
    <property type="evidence" value="ECO:0000314"/>
    <property type="project" value="PomBase"/>
</dbReference>
<dbReference type="GO" id="GO:0043047">
    <property type="term" value="F:single-stranded telomeric DNA binding"/>
    <property type="evidence" value="ECO:0000314"/>
    <property type="project" value="PomBase"/>
</dbReference>
<dbReference type="GO" id="GO:0051321">
    <property type="term" value="P:meiotic cell cycle"/>
    <property type="evidence" value="ECO:0007669"/>
    <property type="project" value="UniProtKB-KW"/>
</dbReference>
<dbReference type="GO" id="GO:0006396">
    <property type="term" value="P:RNA processing"/>
    <property type="evidence" value="ECO:0000304"/>
    <property type="project" value="PomBase"/>
</dbReference>
<dbReference type="CDD" id="cd14819">
    <property type="entry name" value="Translin"/>
    <property type="match status" value="1"/>
</dbReference>
<dbReference type="FunFam" id="1.20.58.190:FF:000001">
    <property type="entry name" value="Translin"/>
    <property type="match status" value="1"/>
</dbReference>
<dbReference type="Gene3D" id="1.20.58.190">
    <property type="entry name" value="Translin, domain 1"/>
    <property type="match status" value="1"/>
</dbReference>
<dbReference type="Gene3D" id="1.20.58.200">
    <property type="entry name" value="Translin, domain 2"/>
    <property type="match status" value="1"/>
</dbReference>
<dbReference type="InterPro" id="IPR033956">
    <property type="entry name" value="Translin"/>
</dbReference>
<dbReference type="InterPro" id="IPR016069">
    <property type="entry name" value="Translin_C"/>
</dbReference>
<dbReference type="InterPro" id="IPR002848">
    <property type="entry name" value="Translin_fam"/>
</dbReference>
<dbReference type="InterPro" id="IPR016068">
    <property type="entry name" value="Translin_N"/>
</dbReference>
<dbReference type="InterPro" id="IPR036081">
    <property type="entry name" value="Translin_sf"/>
</dbReference>
<dbReference type="PANTHER" id="PTHR10741">
    <property type="entry name" value="TRANSLIN AND TRANSLIN ASSOCIATED PROTEIN X"/>
    <property type="match status" value="1"/>
</dbReference>
<dbReference type="Pfam" id="PF01997">
    <property type="entry name" value="Translin"/>
    <property type="match status" value="1"/>
</dbReference>
<dbReference type="SUPFAM" id="SSF74784">
    <property type="entry name" value="Translin"/>
    <property type="match status" value="1"/>
</dbReference>
<evidence type="ECO:0000269" key="1">
    <source>
    </source>
</evidence>
<evidence type="ECO:0000269" key="2">
    <source>
    </source>
</evidence>
<evidence type="ECO:0000269" key="3">
    <source>
    </source>
</evidence>
<evidence type="ECO:0000305" key="4"/>
<reference key="1">
    <citation type="journal article" date="2002" name="Nature">
        <title>The genome sequence of Schizosaccharomyces pombe.</title>
        <authorList>
            <person name="Wood V."/>
            <person name="Gwilliam R."/>
            <person name="Rajandream M.A."/>
            <person name="Lyne M.H."/>
            <person name="Lyne R."/>
            <person name="Stewart A."/>
            <person name="Sgouros J.G."/>
            <person name="Peat N."/>
            <person name="Hayles J."/>
            <person name="Baker S.G."/>
            <person name="Basham D."/>
            <person name="Bowman S."/>
            <person name="Brooks K."/>
            <person name="Brown D."/>
            <person name="Brown S."/>
            <person name="Chillingworth T."/>
            <person name="Churcher C.M."/>
            <person name="Collins M."/>
            <person name="Connor R."/>
            <person name="Cronin A."/>
            <person name="Davis P."/>
            <person name="Feltwell T."/>
            <person name="Fraser A."/>
            <person name="Gentles S."/>
            <person name="Goble A."/>
            <person name="Hamlin N."/>
            <person name="Harris D.E."/>
            <person name="Hidalgo J."/>
            <person name="Hodgson G."/>
            <person name="Holroyd S."/>
            <person name="Hornsby T."/>
            <person name="Howarth S."/>
            <person name="Huckle E.J."/>
            <person name="Hunt S."/>
            <person name="Jagels K."/>
            <person name="James K.D."/>
            <person name="Jones L."/>
            <person name="Jones M."/>
            <person name="Leather S."/>
            <person name="McDonald S."/>
            <person name="McLean J."/>
            <person name="Mooney P."/>
            <person name="Moule S."/>
            <person name="Mungall K.L."/>
            <person name="Murphy L.D."/>
            <person name="Niblett D."/>
            <person name="Odell C."/>
            <person name="Oliver K."/>
            <person name="O'Neil S."/>
            <person name="Pearson D."/>
            <person name="Quail M.A."/>
            <person name="Rabbinowitsch E."/>
            <person name="Rutherford K.M."/>
            <person name="Rutter S."/>
            <person name="Saunders D."/>
            <person name="Seeger K."/>
            <person name="Sharp S."/>
            <person name="Skelton J."/>
            <person name="Simmonds M.N."/>
            <person name="Squares R."/>
            <person name="Squares S."/>
            <person name="Stevens K."/>
            <person name="Taylor K."/>
            <person name="Taylor R.G."/>
            <person name="Tivey A."/>
            <person name="Walsh S.V."/>
            <person name="Warren T."/>
            <person name="Whitehead S."/>
            <person name="Woodward J.R."/>
            <person name="Volckaert G."/>
            <person name="Aert R."/>
            <person name="Robben J."/>
            <person name="Grymonprez B."/>
            <person name="Weltjens I."/>
            <person name="Vanstreels E."/>
            <person name="Rieger M."/>
            <person name="Schaefer M."/>
            <person name="Mueller-Auer S."/>
            <person name="Gabel C."/>
            <person name="Fuchs M."/>
            <person name="Duesterhoeft A."/>
            <person name="Fritzc C."/>
            <person name="Holzer E."/>
            <person name="Moestl D."/>
            <person name="Hilbert H."/>
            <person name="Borzym K."/>
            <person name="Langer I."/>
            <person name="Beck A."/>
            <person name="Lehrach H."/>
            <person name="Reinhardt R."/>
            <person name="Pohl T.M."/>
            <person name="Eger P."/>
            <person name="Zimmermann W."/>
            <person name="Wedler H."/>
            <person name="Wambutt R."/>
            <person name="Purnelle B."/>
            <person name="Goffeau A."/>
            <person name="Cadieu E."/>
            <person name="Dreano S."/>
            <person name="Gloux S."/>
            <person name="Lelaure V."/>
            <person name="Mottier S."/>
            <person name="Galibert F."/>
            <person name="Aves S.J."/>
            <person name="Xiang Z."/>
            <person name="Hunt C."/>
            <person name="Moore K."/>
            <person name="Hurst S.M."/>
            <person name="Lucas M."/>
            <person name="Rochet M."/>
            <person name="Gaillardin C."/>
            <person name="Tallada V.A."/>
            <person name="Garzon A."/>
            <person name="Thode G."/>
            <person name="Daga R.R."/>
            <person name="Cruzado L."/>
            <person name="Jimenez J."/>
            <person name="Sanchez M."/>
            <person name="del Rey F."/>
            <person name="Benito J."/>
            <person name="Dominguez A."/>
            <person name="Revuelta J.L."/>
            <person name="Moreno S."/>
            <person name="Armstrong J."/>
            <person name="Forsburg S.L."/>
            <person name="Cerutti L."/>
            <person name="Lowe T."/>
            <person name="McCombie W.R."/>
            <person name="Paulsen I."/>
            <person name="Potashkin J."/>
            <person name="Shpakovski G.V."/>
            <person name="Ussery D."/>
            <person name="Barrell B.G."/>
            <person name="Nurse P."/>
        </authorList>
    </citation>
    <scope>NUCLEOTIDE SEQUENCE [LARGE SCALE GENOMIC DNA]</scope>
    <source>
        <strain>972 / ATCC 24843</strain>
    </source>
</reference>
<reference key="2">
    <citation type="journal article" date="2005" name="Curr. Biol.">
        <title>A large-scale screen in S. pombe identifies seven novel genes required for critical meiotic events.</title>
        <authorList>
            <person name="Martin-Castellanos C."/>
            <person name="Blanco M."/>
            <person name="Rozalen A.E."/>
            <person name="Perez-Hidalgo L."/>
            <person name="Garcia A.I."/>
            <person name="Conde F."/>
            <person name="Mata J."/>
            <person name="Ellermeier C."/>
            <person name="Davis L."/>
            <person name="San-Segundo P."/>
            <person name="Smith G.R."/>
            <person name="Moreno S."/>
        </authorList>
    </citation>
    <scope>FUNCTION IN MEIOSIS</scope>
</reference>
<reference key="3">
    <citation type="journal article" date="2005" name="Nucleic Acids Res.">
        <title>Cloning and characterization of the Schizosaccharomyces pombe homologs of the human protein translin and the translin-associated protein TRAX.</title>
        <authorList>
            <person name="Laufman O."/>
            <person name="Ben Yosef R."/>
            <person name="Adir N."/>
            <person name="Manor H."/>
        </authorList>
    </citation>
    <scope>FUNCTION</scope>
    <scope>SUBUNIT</scope>
    <scope>DELETION MUTANT</scope>
</reference>
<reference key="4">
    <citation type="journal article" date="2006" name="Nat. Biotechnol.">
        <title>ORFeome cloning and global analysis of protein localization in the fission yeast Schizosaccharomyces pombe.</title>
        <authorList>
            <person name="Matsuyama A."/>
            <person name="Arai R."/>
            <person name="Yashiroda Y."/>
            <person name="Shirai A."/>
            <person name="Kamata A."/>
            <person name="Sekido S."/>
            <person name="Kobayashi Y."/>
            <person name="Hashimoto A."/>
            <person name="Hamamoto M."/>
            <person name="Hiraoka Y."/>
            <person name="Horinouchi S."/>
            <person name="Yoshida M."/>
        </authorList>
    </citation>
    <scope>SUBCELLULAR LOCATION [LARGE SCALE ANALYSIS]</scope>
</reference>